<reference key="1">
    <citation type="submission" date="2006-05" db="EMBL/GenBank/DDBJ databases">
        <title>The centre for applied genomics genome annotation project.</title>
        <authorList>
            <person name="Parker-Katiraee L."/>
            <person name="Scherer S.W."/>
        </authorList>
    </citation>
    <scope>NUCLEOTIDE SEQUENCE [GENOMIC DNA]</scope>
</reference>
<organism>
    <name type="scientific">Pan troglodytes</name>
    <name type="common">Chimpanzee</name>
    <dbReference type="NCBI Taxonomy" id="9598"/>
    <lineage>
        <taxon>Eukaryota</taxon>
        <taxon>Metazoa</taxon>
        <taxon>Chordata</taxon>
        <taxon>Craniata</taxon>
        <taxon>Vertebrata</taxon>
        <taxon>Euteleostomi</taxon>
        <taxon>Mammalia</taxon>
        <taxon>Eutheria</taxon>
        <taxon>Euarchontoglires</taxon>
        <taxon>Primates</taxon>
        <taxon>Haplorrhini</taxon>
        <taxon>Catarrhini</taxon>
        <taxon>Hominidae</taxon>
        <taxon>Pan</taxon>
    </lineage>
</organism>
<keyword id="KW-0238">DNA-binding</keyword>
<keyword id="KW-0479">Metal-binding</keyword>
<keyword id="KW-0539">Nucleus</keyword>
<keyword id="KW-1185">Reference proteome</keyword>
<keyword id="KW-0677">Repeat</keyword>
<keyword id="KW-0804">Transcription</keyword>
<keyword id="KW-0805">Transcription regulation</keyword>
<keyword id="KW-0862">Zinc</keyword>
<keyword id="KW-0863">Zinc-finger</keyword>
<accession>Q19A40</accession>
<proteinExistence type="inferred from homology"/>
<comment type="subcellular location">
    <subcellularLocation>
        <location evidence="1">Nucleus</location>
    </subcellularLocation>
</comment>
<comment type="similarity">
    <text evidence="4">Belongs to the Sp1 C2H2-type zinc-finger protein family.</text>
</comment>
<feature type="chain" id="PRO_0000251153" description="Krueppel-like factor 14">
    <location>
        <begin position="1"/>
        <end position="323"/>
    </location>
</feature>
<feature type="zinc finger region" description="C2H2-type 1" evidence="2">
    <location>
        <begin position="195"/>
        <end position="224"/>
    </location>
</feature>
<feature type="zinc finger region" description="C2H2-type 2" evidence="2">
    <location>
        <begin position="225"/>
        <end position="254"/>
    </location>
</feature>
<feature type="zinc finger region" description="C2H2-type 3" evidence="2">
    <location>
        <begin position="255"/>
        <end position="282"/>
    </location>
</feature>
<feature type="region of interest" description="Disordered" evidence="3">
    <location>
        <begin position="27"/>
        <end position="78"/>
    </location>
</feature>
<feature type="region of interest" description="Disordered" evidence="3">
    <location>
        <begin position="94"/>
        <end position="116"/>
    </location>
</feature>
<feature type="region of interest" description="Disordered" evidence="3">
    <location>
        <begin position="142"/>
        <end position="161"/>
    </location>
</feature>
<feature type="region of interest" description="Disordered" evidence="3">
    <location>
        <begin position="166"/>
        <end position="195"/>
    </location>
</feature>
<feature type="region of interest" description="Disordered" evidence="3">
    <location>
        <begin position="279"/>
        <end position="323"/>
    </location>
</feature>
<feature type="compositionally biased region" description="Low complexity" evidence="3">
    <location>
        <begin position="40"/>
        <end position="53"/>
    </location>
</feature>
<feature type="compositionally biased region" description="Pro residues" evidence="3">
    <location>
        <begin position="54"/>
        <end position="73"/>
    </location>
</feature>
<feature type="compositionally biased region" description="Low complexity" evidence="3">
    <location>
        <begin position="94"/>
        <end position="106"/>
    </location>
</feature>
<feature type="compositionally biased region" description="Basic residues" evidence="3">
    <location>
        <begin position="184"/>
        <end position="195"/>
    </location>
</feature>
<dbReference type="EMBL" id="DQ534759">
    <property type="protein sequence ID" value="ABF82395.1"/>
    <property type="molecule type" value="Genomic_DNA"/>
</dbReference>
<dbReference type="RefSeq" id="XP_003318849.1">
    <property type="nucleotide sequence ID" value="XM_003318801.5"/>
</dbReference>
<dbReference type="SMR" id="Q19A40"/>
<dbReference type="FunCoup" id="Q19A40">
    <property type="interactions" value="97"/>
</dbReference>
<dbReference type="STRING" id="9598.ENSPTRP00000033750"/>
<dbReference type="PaxDb" id="9598-ENSPTRP00000033750"/>
<dbReference type="Ensembl" id="ENSPTRT00000036504.5">
    <property type="protein sequence ID" value="ENSPTRP00000033750.4"/>
    <property type="gene ID" value="ENSPTRG00000019701.7"/>
</dbReference>
<dbReference type="GeneID" id="735419"/>
<dbReference type="KEGG" id="ptr:735419"/>
<dbReference type="CTD" id="136259"/>
<dbReference type="VGNC" id="VGNC:14031">
    <property type="gene designation" value="KLF14"/>
</dbReference>
<dbReference type="eggNOG" id="KOG1721">
    <property type="taxonomic scope" value="Eukaryota"/>
</dbReference>
<dbReference type="GeneTree" id="ENSGT00940000163415"/>
<dbReference type="HOGENOM" id="CLU_002678_33_2_1"/>
<dbReference type="InParanoid" id="Q19A40"/>
<dbReference type="OMA" id="EVSGPMH"/>
<dbReference type="OrthoDB" id="17237at9604"/>
<dbReference type="TreeFam" id="TF351003"/>
<dbReference type="Proteomes" id="UP000002277">
    <property type="component" value="Chromosome 7"/>
</dbReference>
<dbReference type="Bgee" id="ENSPTRG00000019701">
    <property type="expression patterns" value="Expressed in hindlimb stylopod muscle and 1 other cell type or tissue"/>
</dbReference>
<dbReference type="GO" id="GO:0005634">
    <property type="term" value="C:nucleus"/>
    <property type="evidence" value="ECO:0007669"/>
    <property type="project" value="UniProtKB-SubCell"/>
</dbReference>
<dbReference type="GO" id="GO:0003682">
    <property type="term" value="F:chromatin binding"/>
    <property type="evidence" value="ECO:0007669"/>
    <property type="project" value="Ensembl"/>
</dbReference>
<dbReference type="GO" id="GO:0000981">
    <property type="term" value="F:DNA-binding transcription factor activity, RNA polymerase II-specific"/>
    <property type="evidence" value="ECO:0000318"/>
    <property type="project" value="GO_Central"/>
</dbReference>
<dbReference type="GO" id="GO:0000978">
    <property type="term" value="F:RNA polymerase II cis-regulatory region sequence-specific DNA binding"/>
    <property type="evidence" value="ECO:0000318"/>
    <property type="project" value="GO_Central"/>
</dbReference>
<dbReference type="GO" id="GO:0008270">
    <property type="term" value="F:zinc ion binding"/>
    <property type="evidence" value="ECO:0007669"/>
    <property type="project" value="UniProtKB-KW"/>
</dbReference>
<dbReference type="GO" id="GO:1902070">
    <property type="term" value="P:positive regulation of sphingolipid mediated signaling pathway"/>
    <property type="evidence" value="ECO:0007669"/>
    <property type="project" value="Ensembl"/>
</dbReference>
<dbReference type="GO" id="GO:0045944">
    <property type="term" value="P:positive regulation of transcription by RNA polymerase II"/>
    <property type="evidence" value="ECO:0007669"/>
    <property type="project" value="Ensembl"/>
</dbReference>
<dbReference type="GO" id="GO:0006357">
    <property type="term" value="P:regulation of transcription by RNA polymerase II"/>
    <property type="evidence" value="ECO:0000318"/>
    <property type="project" value="GO_Central"/>
</dbReference>
<dbReference type="CDD" id="cd21576">
    <property type="entry name" value="KLF14_N"/>
    <property type="match status" value="1"/>
</dbReference>
<dbReference type="FunFam" id="3.30.160.60:FF:000595">
    <property type="entry name" value="Krueppel-like factor 14"/>
    <property type="match status" value="1"/>
</dbReference>
<dbReference type="FunFam" id="3.30.160.60:FF:000018">
    <property type="entry name" value="Krueppel-like factor 15"/>
    <property type="match status" value="1"/>
</dbReference>
<dbReference type="FunFam" id="3.30.160.60:FF:000232">
    <property type="entry name" value="Krueppel-like factor 9"/>
    <property type="match status" value="1"/>
</dbReference>
<dbReference type="Gene3D" id="3.30.160.60">
    <property type="entry name" value="Classic Zinc Finger"/>
    <property type="match status" value="3"/>
</dbReference>
<dbReference type="InterPro" id="IPR036236">
    <property type="entry name" value="Znf_C2H2_sf"/>
</dbReference>
<dbReference type="InterPro" id="IPR013087">
    <property type="entry name" value="Znf_C2H2_type"/>
</dbReference>
<dbReference type="PANTHER" id="PTHR23235:SF59">
    <property type="entry name" value="KRUEPPEL-LIKE FACTOR 14"/>
    <property type="match status" value="1"/>
</dbReference>
<dbReference type="PANTHER" id="PTHR23235">
    <property type="entry name" value="KRUEPPEL-LIKE TRANSCRIPTION FACTOR"/>
    <property type="match status" value="1"/>
</dbReference>
<dbReference type="Pfam" id="PF00096">
    <property type="entry name" value="zf-C2H2"/>
    <property type="match status" value="3"/>
</dbReference>
<dbReference type="SMART" id="SM00355">
    <property type="entry name" value="ZnF_C2H2"/>
    <property type="match status" value="3"/>
</dbReference>
<dbReference type="SUPFAM" id="SSF57667">
    <property type="entry name" value="beta-beta-alpha zinc fingers"/>
    <property type="match status" value="2"/>
</dbReference>
<dbReference type="PROSITE" id="PS00028">
    <property type="entry name" value="ZINC_FINGER_C2H2_1"/>
    <property type="match status" value="3"/>
</dbReference>
<dbReference type="PROSITE" id="PS50157">
    <property type="entry name" value="ZINC_FINGER_C2H2_2"/>
    <property type="match status" value="3"/>
</dbReference>
<name>KLF14_PANTR</name>
<evidence type="ECO:0000250" key="1"/>
<evidence type="ECO:0000255" key="2">
    <source>
        <dbReference type="PROSITE-ProRule" id="PRU00042"/>
    </source>
</evidence>
<evidence type="ECO:0000256" key="3">
    <source>
        <dbReference type="SAM" id="MobiDB-lite"/>
    </source>
</evidence>
<evidence type="ECO:0000305" key="4"/>
<sequence length="323" mass="33101">MSAAVACLDYFAAECLVSMSAGAVVHRRPPDPEGAGGAAGSEVGAAPPESALPGPGPPGPASVPPLPQVPAPSPGAGGAAPHLLAASVWADLRGSSGEGSWENSGEAPRASSGFSDPIPCSVQTPCSELAPASGAAAVCAPESSSDAPAVPSAPAAPGAPAASGGFSGGALGAGPAPAADQVPRRRPVTPAAKRHQCPFPGCTKAYYKSSHLKSHQRTHTGERPFSCDWLDCDKKFTRSDELARHYRTHTGEKRFSCPLCPKQFSRSDHLTKHARRHPTYHPDMIEYRGRRRTPRIDPPLTSEVESSASGSGPGPAPSFTTCL</sequence>
<gene>
    <name type="primary">KLF14</name>
</gene>
<protein>
    <recommendedName>
        <fullName>Krueppel-like factor 14</fullName>
    </recommendedName>
</protein>